<keyword id="KW-0030">Aminoacyl-tRNA synthetase</keyword>
<keyword id="KW-0067">ATP-binding</keyword>
<keyword id="KW-0963">Cytoplasm</keyword>
<keyword id="KW-0436">Ligase</keyword>
<keyword id="KW-0547">Nucleotide-binding</keyword>
<keyword id="KW-0648">Protein biosynthesis</keyword>
<dbReference type="EC" id="6.1.1.15" evidence="1"/>
<dbReference type="EMBL" id="CP001612">
    <property type="protein sequence ID" value="ACP53411.1"/>
    <property type="molecule type" value="Genomic_DNA"/>
</dbReference>
<dbReference type="RefSeq" id="WP_010977166.1">
    <property type="nucleotide sequence ID" value="NC_012633.1"/>
</dbReference>
<dbReference type="SMR" id="C3PNA1"/>
<dbReference type="GeneID" id="927646"/>
<dbReference type="KEGG" id="raf:RAF_ORF0490"/>
<dbReference type="HOGENOM" id="CLU_016739_4_2_5"/>
<dbReference type="Proteomes" id="UP000002305">
    <property type="component" value="Chromosome"/>
</dbReference>
<dbReference type="GO" id="GO:0005829">
    <property type="term" value="C:cytosol"/>
    <property type="evidence" value="ECO:0007669"/>
    <property type="project" value="TreeGrafter"/>
</dbReference>
<dbReference type="GO" id="GO:0005524">
    <property type="term" value="F:ATP binding"/>
    <property type="evidence" value="ECO:0007669"/>
    <property type="project" value="UniProtKB-UniRule"/>
</dbReference>
<dbReference type="GO" id="GO:0004827">
    <property type="term" value="F:proline-tRNA ligase activity"/>
    <property type="evidence" value="ECO:0007669"/>
    <property type="project" value="UniProtKB-UniRule"/>
</dbReference>
<dbReference type="GO" id="GO:0006433">
    <property type="term" value="P:prolyl-tRNA aminoacylation"/>
    <property type="evidence" value="ECO:0007669"/>
    <property type="project" value="UniProtKB-UniRule"/>
</dbReference>
<dbReference type="CDD" id="cd00861">
    <property type="entry name" value="ProRS_anticodon_short"/>
    <property type="match status" value="1"/>
</dbReference>
<dbReference type="CDD" id="cd00779">
    <property type="entry name" value="ProRS_core_prok"/>
    <property type="match status" value="1"/>
</dbReference>
<dbReference type="FunFam" id="3.30.930.10:FF:000042">
    <property type="entry name" value="probable proline--tRNA ligase, mitochondrial"/>
    <property type="match status" value="1"/>
</dbReference>
<dbReference type="FunFam" id="3.40.50.800:FF:000032">
    <property type="entry name" value="Proline--tRNA ligase"/>
    <property type="match status" value="1"/>
</dbReference>
<dbReference type="Gene3D" id="3.40.50.800">
    <property type="entry name" value="Anticodon-binding domain"/>
    <property type="match status" value="1"/>
</dbReference>
<dbReference type="Gene3D" id="3.30.930.10">
    <property type="entry name" value="Bira Bifunctional Protein, Domain 2"/>
    <property type="match status" value="1"/>
</dbReference>
<dbReference type="HAMAP" id="MF_01570">
    <property type="entry name" value="Pro_tRNA_synth_type2"/>
    <property type="match status" value="1"/>
</dbReference>
<dbReference type="InterPro" id="IPR002314">
    <property type="entry name" value="aa-tRNA-synt_IIb"/>
</dbReference>
<dbReference type="InterPro" id="IPR006195">
    <property type="entry name" value="aa-tRNA-synth_II"/>
</dbReference>
<dbReference type="InterPro" id="IPR045864">
    <property type="entry name" value="aa-tRNA-synth_II/BPL/LPL"/>
</dbReference>
<dbReference type="InterPro" id="IPR004154">
    <property type="entry name" value="Anticodon-bd"/>
</dbReference>
<dbReference type="InterPro" id="IPR036621">
    <property type="entry name" value="Anticodon-bd_dom_sf"/>
</dbReference>
<dbReference type="InterPro" id="IPR002316">
    <property type="entry name" value="Pro-tRNA-ligase_IIa"/>
</dbReference>
<dbReference type="InterPro" id="IPR004500">
    <property type="entry name" value="Pro-tRNA-synth_IIa_bac-type"/>
</dbReference>
<dbReference type="InterPro" id="IPR050062">
    <property type="entry name" value="Pro-tRNA_synthetase"/>
</dbReference>
<dbReference type="InterPro" id="IPR023716">
    <property type="entry name" value="Prolyl-tRNA_ligase_IIa_type2"/>
</dbReference>
<dbReference type="InterPro" id="IPR044140">
    <property type="entry name" value="ProRS_anticodon_short"/>
</dbReference>
<dbReference type="InterPro" id="IPR033730">
    <property type="entry name" value="ProRS_core_prok"/>
</dbReference>
<dbReference type="NCBIfam" id="NF008979">
    <property type="entry name" value="PRK12325.1"/>
    <property type="match status" value="1"/>
</dbReference>
<dbReference type="NCBIfam" id="TIGR00409">
    <property type="entry name" value="proS_fam_II"/>
    <property type="match status" value="1"/>
</dbReference>
<dbReference type="PANTHER" id="PTHR42753">
    <property type="entry name" value="MITOCHONDRIAL RIBOSOME PROTEIN L39/PROLYL-TRNA LIGASE FAMILY MEMBER"/>
    <property type="match status" value="1"/>
</dbReference>
<dbReference type="PANTHER" id="PTHR42753:SF2">
    <property type="entry name" value="PROLINE--TRNA LIGASE"/>
    <property type="match status" value="1"/>
</dbReference>
<dbReference type="Pfam" id="PF03129">
    <property type="entry name" value="HGTP_anticodon"/>
    <property type="match status" value="1"/>
</dbReference>
<dbReference type="Pfam" id="PF00587">
    <property type="entry name" value="tRNA-synt_2b"/>
    <property type="match status" value="1"/>
</dbReference>
<dbReference type="PRINTS" id="PR01046">
    <property type="entry name" value="TRNASYNTHPRO"/>
</dbReference>
<dbReference type="SUPFAM" id="SSF52954">
    <property type="entry name" value="Class II aaRS ABD-related"/>
    <property type="match status" value="1"/>
</dbReference>
<dbReference type="SUPFAM" id="SSF55681">
    <property type="entry name" value="Class II aaRS and biotin synthetases"/>
    <property type="match status" value="1"/>
</dbReference>
<dbReference type="PROSITE" id="PS50862">
    <property type="entry name" value="AA_TRNA_LIGASE_II"/>
    <property type="match status" value="1"/>
</dbReference>
<evidence type="ECO:0000255" key="1">
    <source>
        <dbReference type="HAMAP-Rule" id="MF_01570"/>
    </source>
</evidence>
<comment type="function">
    <text evidence="1">Catalyzes the attachment of proline to tRNA(Pro) in a two-step reaction: proline is first activated by ATP to form Pro-AMP and then transferred to the acceptor end of tRNA(Pro).</text>
</comment>
<comment type="catalytic activity">
    <reaction evidence="1">
        <text>tRNA(Pro) + L-proline + ATP = L-prolyl-tRNA(Pro) + AMP + diphosphate</text>
        <dbReference type="Rhea" id="RHEA:14305"/>
        <dbReference type="Rhea" id="RHEA-COMP:9700"/>
        <dbReference type="Rhea" id="RHEA-COMP:9702"/>
        <dbReference type="ChEBI" id="CHEBI:30616"/>
        <dbReference type="ChEBI" id="CHEBI:33019"/>
        <dbReference type="ChEBI" id="CHEBI:60039"/>
        <dbReference type="ChEBI" id="CHEBI:78442"/>
        <dbReference type="ChEBI" id="CHEBI:78532"/>
        <dbReference type="ChEBI" id="CHEBI:456215"/>
        <dbReference type="EC" id="6.1.1.15"/>
    </reaction>
</comment>
<comment type="subunit">
    <text evidence="1">Homodimer.</text>
</comment>
<comment type="subcellular location">
    <subcellularLocation>
        <location evidence="1">Cytoplasm</location>
    </subcellularLocation>
</comment>
<comment type="similarity">
    <text evidence="1">Belongs to the class-II aminoacyl-tRNA synthetase family. ProS type 2 subfamily.</text>
</comment>
<organism>
    <name type="scientific">Rickettsia africae (strain ESF-5)</name>
    <dbReference type="NCBI Taxonomy" id="347255"/>
    <lineage>
        <taxon>Bacteria</taxon>
        <taxon>Pseudomonadati</taxon>
        <taxon>Pseudomonadota</taxon>
        <taxon>Alphaproteobacteria</taxon>
        <taxon>Rickettsiales</taxon>
        <taxon>Rickettsiaceae</taxon>
        <taxon>Rickettsieae</taxon>
        <taxon>Rickettsia</taxon>
        <taxon>spotted fever group</taxon>
    </lineage>
</organism>
<sequence>MLLSKYFLPVLKEEPSEAQVTSHKLMLRSGMIRQQAAGIYTWLPLGLKVLKNIENIVRLNMNKAGALEVLMPCIQPAHLWMESGRFDNYGKEMLKFQDRHDNTLLFGPTNEDMITDIFRHNIKSYKDLPKNLYHIQWKFRDEIRPRFGVMRGREFLMKDAYSFDINEENAVKTYNQMYKAYINAFRDLGVFVIPVIADNGPIGGNLSHEFHIIAETGESTIYYDKKFKTLKDNPDIDVEEIKSWYAAAEEKYEVNKLPISEQEITSSKGIEVGHIFYIGSKYSVNMNALINDEYGKLTPIEMSSYGIGISRLVAAIIEANCDEKGIIWPSSVAPFKVSLINLNIHDSKCVELAEMAYKELSDKNIEVLYDDTEARPGSKFATHDLIGSPHQIIIGPKKAANNIVELKDRKSGVIEDIEVGSLMSVL</sequence>
<reference key="1">
    <citation type="journal article" date="2009" name="BMC Genomics">
        <title>Analysis of the Rickettsia africae genome reveals that virulence acquisition in Rickettsia species may be explained by genome reduction.</title>
        <authorList>
            <person name="Fournier P.-E."/>
            <person name="El Karkouri K."/>
            <person name="Leroy Q."/>
            <person name="Robert C."/>
            <person name="Giumelli B."/>
            <person name="Renesto P."/>
            <person name="Socolovschi C."/>
            <person name="Parola P."/>
            <person name="Audic S."/>
            <person name="Raoult D."/>
        </authorList>
    </citation>
    <scope>NUCLEOTIDE SEQUENCE [LARGE SCALE GENOMIC DNA]</scope>
    <source>
        <strain>ESF-5</strain>
    </source>
</reference>
<name>SYP_RICAE</name>
<accession>C3PNA1</accession>
<protein>
    <recommendedName>
        <fullName evidence="1">Proline--tRNA ligase</fullName>
        <ecNumber evidence="1">6.1.1.15</ecNumber>
    </recommendedName>
    <alternativeName>
        <fullName evidence="1">Prolyl-tRNA synthetase</fullName>
        <shortName evidence="1">ProRS</shortName>
    </alternativeName>
</protein>
<feature type="chain" id="PRO_1000215541" description="Proline--tRNA ligase">
    <location>
        <begin position="1"/>
        <end position="426"/>
    </location>
</feature>
<gene>
    <name evidence="1" type="primary">proS</name>
    <name type="ordered locus">RAF_ORF0490</name>
</gene>
<proteinExistence type="inferred from homology"/>